<comment type="catalytic activity">
    <reaction evidence="1">
        <text>tRNA(Cys) + L-cysteine + ATP = L-cysteinyl-tRNA(Cys) + AMP + diphosphate</text>
        <dbReference type="Rhea" id="RHEA:17773"/>
        <dbReference type="Rhea" id="RHEA-COMP:9661"/>
        <dbReference type="Rhea" id="RHEA-COMP:9679"/>
        <dbReference type="ChEBI" id="CHEBI:30616"/>
        <dbReference type="ChEBI" id="CHEBI:33019"/>
        <dbReference type="ChEBI" id="CHEBI:35235"/>
        <dbReference type="ChEBI" id="CHEBI:78442"/>
        <dbReference type="ChEBI" id="CHEBI:78517"/>
        <dbReference type="ChEBI" id="CHEBI:456215"/>
        <dbReference type="EC" id="6.1.1.16"/>
    </reaction>
</comment>
<comment type="cofactor">
    <cofactor evidence="1">
        <name>Zn(2+)</name>
        <dbReference type="ChEBI" id="CHEBI:29105"/>
    </cofactor>
    <text evidence="1">Binds 1 zinc ion per subunit.</text>
</comment>
<comment type="subunit">
    <text evidence="1">Monomer.</text>
</comment>
<comment type="subcellular location">
    <subcellularLocation>
        <location evidence="1">Cytoplasm</location>
    </subcellularLocation>
</comment>
<comment type="similarity">
    <text evidence="1">Belongs to the class-I aminoacyl-tRNA synthetase family.</text>
</comment>
<name>SYC_RHOP2</name>
<organism>
    <name type="scientific">Rhodopseudomonas palustris (strain HaA2)</name>
    <dbReference type="NCBI Taxonomy" id="316058"/>
    <lineage>
        <taxon>Bacteria</taxon>
        <taxon>Pseudomonadati</taxon>
        <taxon>Pseudomonadota</taxon>
        <taxon>Alphaproteobacteria</taxon>
        <taxon>Hyphomicrobiales</taxon>
        <taxon>Nitrobacteraceae</taxon>
        <taxon>Rhodopseudomonas</taxon>
    </lineage>
</organism>
<proteinExistence type="inferred from homology"/>
<reference key="1">
    <citation type="submission" date="2006-01" db="EMBL/GenBank/DDBJ databases">
        <title>Complete sequence of Rhodopseudomonas palustris HaA2.</title>
        <authorList>
            <consortium name="US DOE Joint Genome Institute"/>
            <person name="Copeland A."/>
            <person name="Lucas S."/>
            <person name="Lapidus A."/>
            <person name="Barry K."/>
            <person name="Detter J.C."/>
            <person name="Glavina T."/>
            <person name="Hammon N."/>
            <person name="Israni S."/>
            <person name="Pitluck S."/>
            <person name="Chain P."/>
            <person name="Malfatti S."/>
            <person name="Shin M."/>
            <person name="Vergez L."/>
            <person name="Schmutz J."/>
            <person name="Larimer F."/>
            <person name="Land M."/>
            <person name="Hauser L."/>
            <person name="Pelletier D.A."/>
            <person name="Kyrpides N."/>
            <person name="Anderson I."/>
            <person name="Oda Y."/>
            <person name="Harwood C.S."/>
            <person name="Richardson P."/>
        </authorList>
    </citation>
    <scope>NUCLEOTIDE SEQUENCE [LARGE SCALE GENOMIC DNA]</scope>
    <source>
        <strain>HaA2</strain>
    </source>
</reference>
<protein>
    <recommendedName>
        <fullName evidence="1">Cysteine--tRNA ligase</fullName>
        <ecNumber evidence="1">6.1.1.16</ecNumber>
    </recommendedName>
    <alternativeName>
        <fullName evidence="1">Cysteinyl-tRNA synthetase</fullName>
        <shortName evidence="1">CysRS</shortName>
    </alternativeName>
</protein>
<sequence>MALRLYDTLTKEKRAFAPIDPSNVRMYVCGPTVYDFAHIGNARPVIVFDVLFRLLRHLYGENHVTYVRNITDVDDKINDRAARDYPGLPLNEAIRKVTEQTERQFHDDVDALGCLRPTVEPRATEHIGEMRTIIDRLVAGGFAYVAADHVLFSPAAMNAANSVLPRYGALANRSLDEMIAGARVDVAPYKRDATDFVLWKPSKPGEPSWPSPAGITMEGRPGWHIECSAMSWKHLGETFDIHGGGIDLVFPHHENEVAQSCCAFQTDRMAQTWMHNGFLQVEGEKMSKSLGNFITIRELLATEKFGGDSWVGEILRFAMIKTHYRSPIDWTVKALDEGHKVLWDWYRDIGDVGPAQQLPGEFIDCLADDLNISSAIAFMHSLRKDKKFAELLATMNFLGFSNAESVLARRPVGVRINLPPAHAEAAVGTVEVLAKPLSKSEIEERIDARTAARARKDFKESDRIRDELAAMGIAIKDGKDADGKPVTTWEIAR</sequence>
<keyword id="KW-0030">Aminoacyl-tRNA synthetase</keyword>
<keyword id="KW-0067">ATP-binding</keyword>
<keyword id="KW-0963">Cytoplasm</keyword>
<keyword id="KW-0436">Ligase</keyword>
<keyword id="KW-0479">Metal-binding</keyword>
<keyword id="KW-0547">Nucleotide-binding</keyword>
<keyword id="KW-0648">Protein biosynthesis</keyword>
<keyword id="KW-1185">Reference proteome</keyword>
<keyword id="KW-0862">Zinc</keyword>
<gene>
    <name evidence="1" type="primary">cysS</name>
    <name type="ordered locus">RPB_3374</name>
</gene>
<accession>Q2IUP0</accession>
<dbReference type="EC" id="6.1.1.16" evidence="1"/>
<dbReference type="EMBL" id="CP000250">
    <property type="protein sequence ID" value="ABD08070.1"/>
    <property type="molecule type" value="Genomic_DNA"/>
</dbReference>
<dbReference type="RefSeq" id="WP_011442254.1">
    <property type="nucleotide sequence ID" value="NC_007778.1"/>
</dbReference>
<dbReference type="SMR" id="Q2IUP0"/>
<dbReference type="STRING" id="316058.RPB_3374"/>
<dbReference type="KEGG" id="rpb:RPB_3374"/>
<dbReference type="eggNOG" id="COG0215">
    <property type="taxonomic scope" value="Bacteria"/>
</dbReference>
<dbReference type="HOGENOM" id="CLU_013528_0_1_5"/>
<dbReference type="OrthoDB" id="9815130at2"/>
<dbReference type="Proteomes" id="UP000008809">
    <property type="component" value="Chromosome"/>
</dbReference>
<dbReference type="GO" id="GO:0005829">
    <property type="term" value="C:cytosol"/>
    <property type="evidence" value="ECO:0007669"/>
    <property type="project" value="TreeGrafter"/>
</dbReference>
<dbReference type="GO" id="GO:0005524">
    <property type="term" value="F:ATP binding"/>
    <property type="evidence" value="ECO:0007669"/>
    <property type="project" value="UniProtKB-UniRule"/>
</dbReference>
<dbReference type="GO" id="GO:0004817">
    <property type="term" value="F:cysteine-tRNA ligase activity"/>
    <property type="evidence" value="ECO:0007669"/>
    <property type="project" value="UniProtKB-UniRule"/>
</dbReference>
<dbReference type="GO" id="GO:0008270">
    <property type="term" value="F:zinc ion binding"/>
    <property type="evidence" value="ECO:0007669"/>
    <property type="project" value="UniProtKB-UniRule"/>
</dbReference>
<dbReference type="GO" id="GO:0006423">
    <property type="term" value="P:cysteinyl-tRNA aminoacylation"/>
    <property type="evidence" value="ECO:0007669"/>
    <property type="project" value="UniProtKB-UniRule"/>
</dbReference>
<dbReference type="CDD" id="cd00672">
    <property type="entry name" value="CysRS_core"/>
    <property type="match status" value="1"/>
</dbReference>
<dbReference type="FunFam" id="3.40.50.620:FF:000068">
    <property type="entry name" value="Cysteine--tRNA ligase"/>
    <property type="match status" value="1"/>
</dbReference>
<dbReference type="Gene3D" id="1.20.120.1910">
    <property type="entry name" value="Cysteine-tRNA ligase, C-terminal anti-codon recognition domain"/>
    <property type="match status" value="1"/>
</dbReference>
<dbReference type="Gene3D" id="3.40.50.620">
    <property type="entry name" value="HUPs"/>
    <property type="match status" value="1"/>
</dbReference>
<dbReference type="HAMAP" id="MF_00041">
    <property type="entry name" value="Cys_tRNA_synth"/>
    <property type="match status" value="1"/>
</dbReference>
<dbReference type="InterPro" id="IPR015803">
    <property type="entry name" value="Cys-tRNA-ligase"/>
</dbReference>
<dbReference type="InterPro" id="IPR024909">
    <property type="entry name" value="Cys-tRNA/MSH_ligase"/>
</dbReference>
<dbReference type="InterPro" id="IPR056411">
    <property type="entry name" value="CysS_C"/>
</dbReference>
<dbReference type="InterPro" id="IPR014729">
    <property type="entry name" value="Rossmann-like_a/b/a_fold"/>
</dbReference>
<dbReference type="InterPro" id="IPR032678">
    <property type="entry name" value="tRNA-synt_1_cat_dom"/>
</dbReference>
<dbReference type="InterPro" id="IPR009080">
    <property type="entry name" value="tRNAsynth_Ia_anticodon-bd"/>
</dbReference>
<dbReference type="NCBIfam" id="TIGR00435">
    <property type="entry name" value="cysS"/>
    <property type="match status" value="1"/>
</dbReference>
<dbReference type="PANTHER" id="PTHR10890:SF3">
    <property type="entry name" value="CYSTEINE--TRNA LIGASE, CYTOPLASMIC"/>
    <property type="match status" value="1"/>
</dbReference>
<dbReference type="PANTHER" id="PTHR10890">
    <property type="entry name" value="CYSTEINYL-TRNA SYNTHETASE"/>
    <property type="match status" value="1"/>
</dbReference>
<dbReference type="Pfam" id="PF23493">
    <property type="entry name" value="CysS_C"/>
    <property type="match status" value="1"/>
</dbReference>
<dbReference type="Pfam" id="PF01406">
    <property type="entry name" value="tRNA-synt_1e"/>
    <property type="match status" value="1"/>
</dbReference>
<dbReference type="PRINTS" id="PR00983">
    <property type="entry name" value="TRNASYNTHCYS"/>
</dbReference>
<dbReference type="SUPFAM" id="SSF47323">
    <property type="entry name" value="Anticodon-binding domain of a subclass of class I aminoacyl-tRNA synthetases"/>
    <property type="match status" value="1"/>
</dbReference>
<dbReference type="SUPFAM" id="SSF52374">
    <property type="entry name" value="Nucleotidylyl transferase"/>
    <property type="match status" value="1"/>
</dbReference>
<feature type="chain" id="PRO_0000240947" description="Cysteine--tRNA ligase">
    <location>
        <begin position="1"/>
        <end position="493"/>
    </location>
</feature>
<feature type="short sequence motif" description="'HIGH' region">
    <location>
        <begin position="31"/>
        <end position="41"/>
    </location>
</feature>
<feature type="short sequence motif" description="'KMSKS' region">
    <location>
        <begin position="285"/>
        <end position="289"/>
    </location>
</feature>
<feature type="binding site" evidence="1">
    <location>
        <position position="29"/>
    </location>
    <ligand>
        <name>Zn(2+)</name>
        <dbReference type="ChEBI" id="CHEBI:29105"/>
    </ligand>
</feature>
<feature type="binding site" evidence="1">
    <location>
        <position position="227"/>
    </location>
    <ligand>
        <name>Zn(2+)</name>
        <dbReference type="ChEBI" id="CHEBI:29105"/>
    </ligand>
</feature>
<feature type="binding site" evidence="1">
    <location>
        <position position="252"/>
    </location>
    <ligand>
        <name>Zn(2+)</name>
        <dbReference type="ChEBI" id="CHEBI:29105"/>
    </ligand>
</feature>
<feature type="binding site" evidence="1">
    <location>
        <position position="256"/>
    </location>
    <ligand>
        <name>Zn(2+)</name>
        <dbReference type="ChEBI" id="CHEBI:29105"/>
    </ligand>
</feature>
<feature type="binding site" evidence="1">
    <location>
        <position position="288"/>
    </location>
    <ligand>
        <name>ATP</name>
        <dbReference type="ChEBI" id="CHEBI:30616"/>
    </ligand>
</feature>
<evidence type="ECO:0000255" key="1">
    <source>
        <dbReference type="HAMAP-Rule" id="MF_00041"/>
    </source>
</evidence>